<evidence type="ECO:0000250" key="1"/>
<evidence type="ECO:0000255" key="2"/>
<evidence type="ECO:0000305" key="3"/>
<keyword id="KW-0472">Membrane</keyword>
<keyword id="KW-1185">Reference proteome</keyword>
<keyword id="KW-0812">Transmembrane</keyword>
<keyword id="KW-1133">Transmembrane helix</keyword>
<keyword id="KW-0926">Vacuole</keyword>
<gene>
    <name type="ORF">SPBCPT2R1.01c</name>
    <name type="ORF">SPBPB2B2.20c</name>
</gene>
<accession>P0CS87</accession>
<accession>Q9P3V9</accession>
<comment type="subcellular location">
    <subcellularLocation>
        <location evidence="1">Vacuole membrane</location>
        <topology evidence="1">Multi-pass membrane protein</topology>
    </subcellularLocation>
</comment>
<comment type="similarity">
    <text evidence="3">Belongs to the UPF0494 family.</text>
</comment>
<feature type="chain" id="PRO_0000416942" description="UPF0494 membrane protein CPT2R1.01c">
    <location>
        <begin position="1"/>
        <end position="269"/>
    </location>
</feature>
<feature type="transmembrane region" description="Helical" evidence="2">
    <location>
        <begin position="107"/>
        <end position="127"/>
    </location>
</feature>
<feature type="transmembrane region" description="Helical" evidence="2">
    <location>
        <begin position="144"/>
        <end position="164"/>
    </location>
</feature>
<feature type="transmembrane region" description="Helical" evidence="2">
    <location>
        <begin position="177"/>
        <end position="197"/>
    </location>
</feature>
<feature type="transmembrane region" description="Helical" evidence="2">
    <location>
        <begin position="201"/>
        <end position="221"/>
    </location>
</feature>
<name>YP41_SCHPO</name>
<organism>
    <name type="scientific">Schizosaccharomyces pombe (strain 972 / ATCC 24843)</name>
    <name type="common">Fission yeast</name>
    <dbReference type="NCBI Taxonomy" id="284812"/>
    <lineage>
        <taxon>Eukaryota</taxon>
        <taxon>Fungi</taxon>
        <taxon>Dikarya</taxon>
        <taxon>Ascomycota</taxon>
        <taxon>Taphrinomycotina</taxon>
        <taxon>Schizosaccharomycetes</taxon>
        <taxon>Schizosaccharomycetales</taxon>
        <taxon>Schizosaccharomycetaceae</taxon>
        <taxon>Schizosaccharomyces</taxon>
    </lineage>
</organism>
<protein>
    <recommendedName>
        <fullName>UPF0494 membrane protein CPT2R1.01c</fullName>
    </recommendedName>
</protein>
<sequence length="269" mass="30580">MSNPESLKKQVEPPGYNELFMVEDVCNVDLEQGLDLCKPEKVNKQSQRSRQSRQSLFTNTIKPQKDKMNIKTNKIKEFLNDLFTEFSKFHNSYYPDGRISTRSNFRWPLLIIWSIIIVFAVDKKFEVQKFLSIWINENRFYSEIWVPIAIYVCLLVLMLLSLIFFAEFAVLALRVTGVIIAVLGMIIAVLGMIIAALGATITGLLYFGHWALYKLVILSLGFKIVTPGDVCVSNTLPTHNGETALHSETTVGSDIEQIELQNMPTPVKK</sequence>
<dbReference type="EMBL" id="BX784043">
    <property type="protein sequence ID" value="CAE54416.1"/>
    <property type="molecule type" value="Genomic_DNA"/>
</dbReference>
<dbReference type="EMBL" id="CU329671">
    <property type="protein sequence ID" value="CAO77670.1"/>
    <property type="molecule type" value="Genomic_DNA"/>
</dbReference>
<dbReference type="RefSeq" id="NP_592763.1">
    <property type="nucleotide sequence ID" value="NM_001020926.2"/>
</dbReference>
<dbReference type="RefSeq" id="XP_001713154.1">
    <property type="nucleotide sequence ID" value="XM_001713102.2"/>
</dbReference>
<dbReference type="SMR" id="P0CS87"/>
<dbReference type="BioGRID" id="277923">
    <property type="interactions" value="25"/>
</dbReference>
<dbReference type="BioGRID" id="279523">
    <property type="interactions" value="44"/>
</dbReference>
<dbReference type="EnsemblFungi" id="SPBC1348.01.1">
    <property type="protein sequence ID" value="SPBC1348.01.1:pep"/>
    <property type="gene ID" value="SPBC1348.01"/>
</dbReference>
<dbReference type="EnsemblFungi" id="SPBCPT2R1.01c.1">
    <property type="protein sequence ID" value="SPBCPT2R1.01c.1:pep"/>
    <property type="gene ID" value="SPBCPT2R1.01c"/>
</dbReference>
<dbReference type="KEGG" id="spo:2543090"/>
<dbReference type="PomBase" id="SPBCPT2R1.01c"/>
<dbReference type="VEuPathDB" id="FungiDB:SPBC1348.01"/>
<dbReference type="VEuPathDB" id="FungiDB:SPBCPT2R1.01c"/>
<dbReference type="HOGENOM" id="CLU_097271_0_0_1"/>
<dbReference type="InParanoid" id="P0CS87"/>
<dbReference type="PhylomeDB" id="P0CS87"/>
<dbReference type="PRO" id="PR:P0CS87"/>
<dbReference type="Proteomes" id="UP000002485">
    <property type="component" value="Chromosome II"/>
</dbReference>
<dbReference type="GO" id="GO:0005774">
    <property type="term" value="C:vacuolar membrane"/>
    <property type="evidence" value="ECO:0007669"/>
    <property type="project" value="UniProtKB-SubCell"/>
</dbReference>
<dbReference type="InterPro" id="IPR009340">
    <property type="entry name" value="DUF999"/>
</dbReference>
<dbReference type="Pfam" id="PF06198">
    <property type="entry name" value="DUF999"/>
    <property type="match status" value="1"/>
</dbReference>
<proteinExistence type="inferred from homology"/>
<reference key="1">
    <citation type="journal article" date="2002" name="Nature">
        <title>The genome sequence of Schizosaccharomyces pombe.</title>
        <authorList>
            <person name="Wood V."/>
            <person name="Gwilliam R."/>
            <person name="Rajandream M.A."/>
            <person name="Lyne M.H."/>
            <person name="Lyne R."/>
            <person name="Stewart A."/>
            <person name="Sgouros J.G."/>
            <person name="Peat N."/>
            <person name="Hayles J."/>
            <person name="Baker S.G."/>
            <person name="Basham D."/>
            <person name="Bowman S."/>
            <person name="Brooks K."/>
            <person name="Brown D."/>
            <person name="Brown S."/>
            <person name="Chillingworth T."/>
            <person name="Churcher C.M."/>
            <person name="Collins M."/>
            <person name="Connor R."/>
            <person name="Cronin A."/>
            <person name="Davis P."/>
            <person name="Feltwell T."/>
            <person name="Fraser A."/>
            <person name="Gentles S."/>
            <person name="Goble A."/>
            <person name="Hamlin N."/>
            <person name="Harris D.E."/>
            <person name="Hidalgo J."/>
            <person name="Hodgson G."/>
            <person name="Holroyd S."/>
            <person name="Hornsby T."/>
            <person name="Howarth S."/>
            <person name="Huckle E.J."/>
            <person name="Hunt S."/>
            <person name="Jagels K."/>
            <person name="James K.D."/>
            <person name="Jones L."/>
            <person name="Jones M."/>
            <person name="Leather S."/>
            <person name="McDonald S."/>
            <person name="McLean J."/>
            <person name="Mooney P."/>
            <person name="Moule S."/>
            <person name="Mungall K.L."/>
            <person name="Murphy L.D."/>
            <person name="Niblett D."/>
            <person name="Odell C."/>
            <person name="Oliver K."/>
            <person name="O'Neil S."/>
            <person name="Pearson D."/>
            <person name="Quail M.A."/>
            <person name="Rabbinowitsch E."/>
            <person name="Rutherford K.M."/>
            <person name="Rutter S."/>
            <person name="Saunders D."/>
            <person name="Seeger K."/>
            <person name="Sharp S."/>
            <person name="Skelton J."/>
            <person name="Simmonds M.N."/>
            <person name="Squares R."/>
            <person name="Squares S."/>
            <person name="Stevens K."/>
            <person name="Taylor K."/>
            <person name="Taylor R.G."/>
            <person name="Tivey A."/>
            <person name="Walsh S.V."/>
            <person name="Warren T."/>
            <person name="Whitehead S."/>
            <person name="Woodward J.R."/>
            <person name="Volckaert G."/>
            <person name="Aert R."/>
            <person name="Robben J."/>
            <person name="Grymonprez B."/>
            <person name="Weltjens I."/>
            <person name="Vanstreels E."/>
            <person name="Rieger M."/>
            <person name="Schaefer M."/>
            <person name="Mueller-Auer S."/>
            <person name="Gabel C."/>
            <person name="Fuchs M."/>
            <person name="Duesterhoeft A."/>
            <person name="Fritzc C."/>
            <person name="Holzer E."/>
            <person name="Moestl D."/>
            <person name="Hilbert H."/>
            <person name="Borzym K."/>
            <person name="Langer I."/>
            <person name="Beck A."/>
            <person name="Lehrach H."/>
            <person name="Reinhardt R."/>
            <person name="Pohl T.M."/>
            <person name="Eger P."/>
            <person name="Zimmermann W."/>
            <person name="Wedler H."/>
            <person name="Wambutt R."/>
            <person name="Purnelle B."/>
            <person name="Goffeau A."/>
            <person name="Cadieu E."/>
            <person name="Dreano S."/>
            <person name="Gloux S."/>
            <person name="Lelaure V."/>
            <person name="Mottier S."/>
            <person name="Galibert F."/>
            <person name="Aves S.J."/>
            <person name="Xiang Z."/>
            <person name="Hunt C."/>
            <person name="Moore K."/>
            <person name="Hurst S.M."/>
            <person name="Lucas M."/>
            <person name="Rochet M."/>
            <person name="Gaillardin C."/>
            <person name="Tallada V.A."/>
            <person name="Garzon A."/>
            <person name="Thode G."/>
            <person name="Daga R.R."/>
            <person name="Cruzado L."/>
            <person name="Jimenez J."/>
            <person name="Sanchez M."/>
            <person name="del Rey F."/>
            <person name="Benito J."/>
            <person name="Dominguez A."/>
            <person name="Revuelta J.L."/>
            <person name="Moreno S."/>
            <person name="Armstrong J."/>
            <person name="Forsburg S.L."/>
            <person name="Cerutti L."/>
            <person name="Lowe T."/>
            <person name="McCombie W.R."/>
            <person name="Paulsen I."/>
            <person name="Potashkin J."/>
            <person name="Shpakovski G.V."/>
            <person name="Ussery D."/>
            <person name="Barrell B.G."/>
            <person name="Nurse P."/>
        </authorList>
    </citation>
    <scope>NUCLEOTIDE SEQUENCE [LARGE SCALE GENOMIC DNA]</scope>
    <source>
        <strain>972 / ATCC 24843</strain>
    </source>
</reference>